<organism>
    <name type="scientific">Geobacter metallireducens (strain ATCC 53774 / DSM 7210 / GS-15)</name>
    <dbReference type="NCBI Taxonomy" id="269799"/>
    <lineage>
        <taxon>Bacteria</taxon>
        <taxon>Pseudomonadati</taxon>
        <taxon>Thermodesulfobacteriota</taxon>
        <taxon>Desulfuromonadia</taxon>
        <taxon>Geobacterales</taxon>
        <taxon>Geobacteraceae</taxon>
        <taxon>Geobacter</taxon>
    </lineage>
</organism>
<proteinExistence type="inferred from homology"/>
<feature type="chain" id="PRO_0000230700" description="Small ribosomal subunit protein uS3">
    <location>
        <begin position="1"/>
        <end position="211"/>
    </location>
</feature>
<feature type="domain" description="KH type-2" evidence="1">
    <location>
        <begin position="38"/>
        <end position="106"/>
    </location>
</feature>
<gene>
    <name evidence="1" type="primary">rpsC</name>
    <name type="ordered locus">Gmet_0632</name>
</gene>
<evidence type="ECO:0000255" key="1">
    <source>
        <dbReference type="HAMAP-Rule" id="MF_01309"/>
    </source>
</evidence>
<evidence type="ECO:0000305" key="2"/>
<reference key="1">
    <citation type="journal article" date="2009" name="BMC Microbiol.">
        <title>The genome sequence of Geobacter metallireducens: features of metabolism, physiology and regulation common and dissimilar to Geobacter sulfurreducens.</title>
        <authorList>
            <person name="Aklujkar M."/>
            <person name="Krushkal J."/>
            <person name="DiBartolo G."/>
            <person name="Lapidus A."/>
            <person name="Land M.L."/>
            <person name="Lovley D.R."/>
        </authorList>
    </citation>
    <scope>NUCLEOTIDE SEQUENCE [LARGE SCALE GENOMIC DNA]</scope>
    <source>
        <strain>ATCC 53774 / DSM 7210 / GS-15</strain>
    </source>
</reference>
<accession>Q39Y00</accession>
<keyword id="KW-1185">Reference proteome</keyword>
<keyword id="KW-0687">Ribonucleoprotein</keyword>
<keyword id="KW-0689">Ribosomal protein</keyword>
<keyword id="KW-0694">RNA-binding</keyword>
<keyword id="KW-0699">rRNA-binding</keyword>
<protein>
    <recommendedName>
        <fullName evidence="1">Small ribosomal subunit protein uS3</fullName>
    </recommendedName>
    <alternativeName>
        <fullName evidence="2">30S ribosomal protein S3</fullName>
    </alternativeName>
</protein>
<sequence length="211" mass="23836">MGQKVNPIGFRLGVIRTWDSRWYAEADYAKLLHEDIKLRNFLKKRLFNSGVSKIEIERAASKAKINIFTARPGLIIGKKGAEVETLKKELAKLTDKEIYLNIQEVRKPELDAQLVSENVALQLERRVAFRRAMKKSVTSALKFGAKGIRITCSGRLGGAEMSRTEWYREGRVPLHTLRADIDYGFAEAKTTYGIIGVKVLIFKGEVLPGQK</sequence>
<comment type="function">
    <text evidence="1">Binds the lower part of the 30S subunit head. Binds mRNA in the 70S ribosome, positioning it for translation.</text>
</comment>
<comment type="subunit">
    <text evidence="1">Part of the 30S ribosomal subunit. Forms a tight complex with proteins S10 and S14.</text>
</comment>
<comment type="similarity">
    <text evidence="1">Belongs to the universal ribosomal protein uS3 family.</text>
</comment>
<dbReference type="EMBL" id="CP000148">
    <property type="protein sequence ID" value="ABB30874.1"/>
    <property type="molecule type" value="Genomic_DNA"/>
</dbReference>
<dbReference type="RefSeq" id="WP_004514242.1">
    <property type="nucleotide sequence ID" value="NC_007517.1"/>
</dbReference>
<dbReference type="SMR" id="Q39Y00"/>
<dbReference type="STRING" id="269799.Gmet_0632"/>
<dbReference type="KEGG" id="gme:Gmet_0632"/>
<dbReference type="eggNOG" id="COG0092">
    <property type="taxonomic scope" value="Bacteria"/>
</dbReference>
<dbReference type="HOGENOM" id="CLU_058591_0_2_7"/>
<dbReference type="Proteomes" id="UP000007073">
    <property type="component" value="Chromosome"/>
</dbReference>
<dbReference type="GO" id="GO:0022627">
    <property type="term" value="C:cytosolic small ribosomal subunit"/>
    <property type="evidence" value="ECO:0007669"/>
    <property type="project" value="TreeGrafter"/>
</dbReference>
<dbReference type="GO" id="GO:0003729">
    <property type="term" value="F:mRNA binding"/>
    <property type="evidence" value="ECO:0007669"/>
    <property type="project" value="UniProtKB-UniRule"/>
</dbReference>
<dbReference type="GO" id="GO:0019843">
    <property type="term" value="F:rRNA binding"/>
    <property type="evidence" value="ECO:0007669"/>
    <property type="project" value="UniProtKB-UniRule"/>
</dbReference>
<dbReference type="GO" id="GO:0003735">
    <property type="term" value="F:structural constituent of ribosome"/>
    <property type="evidence" value="ECO:0007669"/>
    <property type="project" value="InterPro"/>
</dbReference>
<dbReference type="GO" id="GO:0006412">
    <property type="term" value="P:translation"/>
    <property type="evidence" value="ECO:0007669"/>
    <property type="project" value="UniProtKB-UniRule"/>
</dbReference>
<dbReference type="CDD" id="cd02412">
    <property type="entry name" value="KH-II_30S_S3"/>
    <property type="match status" value="1"/>
</dbReference>
<dbReference type="FunFam" id="3.30.1140.32:FF:000009">
    <property type="entry name" value="30S ribosomal protein S3"/>
    <property type="match status" value="1"/>
</dbReference>
<dbReference type="FunFam" id="3.30.300.20:FF:000001">
    <property type="entry name" value="30S ribosomal protein S3"/>
    <property type="match status" value="1"/>
</dbReference>
<dbReference type="Gene3D" id="3.30.300.20">
    <property type="match status" value="1"/>
</dbReference>
<dbReference type="Gene3D" id="3.30.1140.32">
    <property type="entry name" value="Ribosomal protein S3, C-terminal domain"/>
    <property type="match status" value="1"/>
</dbReference>
<dbReference type="HAMAP" id="MF_01309_B">
    <property type="entry name" value="Ribosomal_uS3_B"/>
    <property type="match status" value="1"/>
</dbReference>
<dbReference type="InterPro" id="IPR004087">
    <property type="entry name" value="KH_dom"/>
</dbReference>
<dbReference type="InterPro" id="IPR015946">
    <property type="entry name" value="KH_dom-like_a/b"/>
</dbReference>
<dbReference type="InterPro" id="IPR004044">
    <property type="entry name" value="KH_dom_type_2"/>
</dbReference>
<dbReference type="InterPro" id="IPR009019">
    <property type="entry name" value="KH_sf_prok-type"/>
</dbReference>
<dbReference type="InterPro" id="IPR036419">
    <property type="entry name" value="Ribosomal_S3_C_sf"/>
</dbReference>
<dbReference type="InterPro" id="IPR005704">
    <property type="entry name" value="Ribosomal_uS3_bac-typ"/>
</dbReference>
<dbReference type="InterPro" id="IPR001351">
    <property type="entry name" value="Ribosomal_uS3_C"/>
</dbReference>
<dbReference type="InterPro" id="IPR018280">
    <property type="entry name" value="Ribosomal_uS3_CS"/>
</dbReference>
<dbReference type="NCBIfam" id="TIGR01009">
    <property type="entry name" value="rpsC_bact"/>
    <property type="match status" value="1"/>
</dbReference>
<dbReference type="PANTHER" id="PTHR11760">
    <property type="entry name" value="30S/40S RIBOSOMAL PROTEIN S3"/>
    <property type="match status" value="1"/>
</dbReference>
<dbReference type="PANTHER" id="PTHR11760:SF19">
    <property type="entry name" value="SMALL RIBOSOMAL SUBUNIT PROTEIN US3C"/>
    <property type="match status" value="1"/>
</dbReference>
<dbReference type="Pfam" id="PF07650">
    <property type="entry name" value="KH_2"/>
    <property type="match status" value="1"/>
</dbReference>
<dbReference type="Pfam" id="PF00189">
    <property type="entry name" value="Ribosomal_S3_C"/>
    <property type="match status" value="1"/>
</dbReference>
<dbReference type="SMART" id="SM00322">
    <property type="entry name" value="KH"/>
    <property type="match status" value="1"/>
</dbReference>
<dbReference type="SUPFAM" id="SSF54814">
    <property type="entry name" value="Prokaryotic type KH domain (KH-domain type II)"/>
    <property type="match status" value="1"/>
</dbReference>
<dbReference type="SUPFAM" id="SSF54821">
    <property type="entry name" value="Ribosomal protein S3 C-terminal domain"/>
    <property type="match status" value="1"/>
</dbReference>
<dbReference type="PROSITE" id="PS50823">
    <property type="entry name" value="KH_TYPE_2"/>
    <property type="match status" value="1"/>
</dbReference>
<dbReference type="PROSITE" id="PS00548">
    <property type="entry name" value="RIBOSOMAL_S3"/>
    <property type="match status" value="1"/>
</dbReference>
<name>RS3_GEOMG</name>